<evidence type="ECO:0000255" key="1"/>
<evidence type="ECO:0000269" key="2">
    <source>
    </source>
</evidence>
<evidence type="ECO:0000269" key="3">
    <source>
    </source>
</evidence>
<evidence type="ECO:0000269" key="4">
    <source>
    </source>
</evidence>
<evidence type="ECO:0000269" key="5">
    <source>
    </source>
</evidence>
<evidence type="ECO:0000269" key="6">
    <source>
    </source>
</evidence>
<evidence type="ECO:0000305" key="7"/>
<evidence type="ECO:0000305" key="8">
    <source>
    </source>
</evidence>
<evidence type="ECO:0007744" key="9">
    <source>
    </source>
</evidence>
<evidence type="ECO:0007744" key="10">
    <source>
    </source>
</evidence>
<sequence length="118" mass="13291">MAAPPEPGEPEERKSLKLLGFLDVENTPCARHSILYGSLGSVVAGFGHFLFTSRIRRSCDVGVGGFILVTLGCWFHCRYNYAKQRIQERIAREEIKKKILYEGTHLDPERKHNGSSSN</sequence>
<reference key="1">
    <citation type="journal article" date="2006" name="Nature">
        <title>The DNA sequence and biological annotation of human chromosome 1.</title>
        <authorList>
            <person name="Gregory S.G."/>
            <person name="Barlow K.F."/>
            <person name="McLay K.E."/>
            <person name="Kaul R."/>
            <person name="Swarbreck D."/>
            <person name="Dunham A."/>
            <person name="Scott C.E."/>
            <person name="Howe K.L."/>
            <person name="Woodfine K."/>
            <person name="Spencer C.C.A."/>
            <person name="Jones M.C."/>
            <person name="Gillson C."/>
            <person name="Searle S."/>
            <person name="Zhou Y."/>
            <person name="Kokocinski F."/>
            <person name="McDonald L."/>
            <person name="Evans R."/>
            <person name="Phillips K."/>
            <person name="Atkinson A."/>
            <person name="Cooper R."/>
            <person name="Jones C."/>
            <person name="Hall R.E."/>
            <person name="Andrews T.D."/>
            <person name="Lloyd C."/>
            <person name="Ainscough R."/>
            <person name="Almeida J.P."/>
            <person name="Ambrose K.D."/>
            <person name="Anderson F."/>
            <person name="Andrew R.W."/>
            <person name="Ashwell R.I.S."/>
            <person name="Aubin K."/>
            <person name="Babbage A.K."/>
            <person name="Bagguley C.L."/>
            <person name="Bailey J."/>
            <person name="Beasley H."/>
            <person name="Bethel G."/>
            <person name="Bird C.P."/>
            <person name="Bray-Allen S."/>
            <person name="Brown J.Y."/>
            <person name="Brown A.J."/>
            <person name="Buckley D."/>
            <person name="Burton J."/>
            <person name="Bye J."/>
            <person name="Carder C."/>
            <person name="Chapman J.C."/>
            <person name="Clark S.Y."/>
            <person name="Clarke G."/>
            <person name="Clee C."/>
            <person name="Cobley V."/>
            <person name="Collier R.E."/>
            <person name="Corby N."/>
            <person name="Coville G.J."/>
            <person name="Davies J."/>
            <person name="Deadman R."/>
            <person name="Dunn M."/>
            <person name="Earthrowl M."/>
            <person name="Ellington A.G."/>
            <person name="Errington H."/>
            <person name="Frankish A."/>
            <person name="Frankland J."/>
            <person name="French L."/>
            <person name="Garner P."/>
            <person name="Garnett J."/>
            <person name="Gay L."/>
            <person name="Ghori M.R.J."/>
            <person name="Gibson R."/>
            <person name="Gilby L.M."/>
            <person name="Gillett W."/>
            <person name="Glithero R.J."/>
            <person name="Grafham D.V."/>
            <person name="Griffiths C."/>
            <person name="Griffiths-Jones S."/>
            <person name="Grocock R."/>
            <person name="Hammond S."/>
            <person name="Harrison E.S.I."/>
            <person name="Hart E."/>
            <person name="Haugen E."/>
            <person name="Heath P.D."/>
            <person name="Holmes S."/>
            <person name="Holt K."/>
            <person name="Howden P.J."/>
            <person name="Hunt A.R."/>
            <person name="Hunt S.E."/>
            <person name="Hunter G."/>
            <person name="Isherwood J."/>
            <person name="James R."/>
            <person name="Johnson C."/>
            <person name="Johnson D."/>
            <person name="Joy A."/>
            <person name="Kay M."/>
            <person name="Kershaw J.K."/>
            <person name="Kibukawa M."/>
            <person name="Kimberley A.M."/>
            <person name="King A."/>
            <person name="Knights A.J."/>
            <person name="Lad H."/>
            <person name="Laird G."/>
            <person name="Lawlor S."/>
            <person name="Leongamornlert D.A."/>
            <person name="Lloyd D.M."/>
            <person name="Loveland J."/>
            <person name="Lovell J."/>
            <person name="Lush M.J."/>
            <person name="Lyne R."/>
            <person name="Martin S."/>
            <person name="Mashreghi-Mohammadi M."/>
            <person name="Matthews L."/>
            <person name="Matthews N.S.W."/>
            <person name="McLaren S."/>
            <person name="Milne S."/>
            <person name="Mistry S."/>
            <person name="Moore M.J.F."/>
            <person name="Nickerson T."/>
            <person name="O'Dell C.N."/>
            <person name="Oliver K."/>
            <person name="Palmeiri A."/>
            <person name="Palmer S.A."/>
            <person name="Parker A."/>
            <person name="Patel D."/>
            <person name="Pearce A.V."/>
            <person name="Peck A.I."/>
            <person name="Pelan S."/>
            <person name="Phelps K."/>
            <person name="Phillimore B.J."/>
            <person name="Plumb R."/>
            <person name="Rajan J."/>
            <person name="Raymond C."/>
            <person name="Rouse G."/>
            <person name="Saenphimmachak C."/>
            <person name="Sehra H.K."/>
            <person name="Sheridan E."/>
            <person name="Shownkeen R."/>
            <person name="Sims S."/>
            <person name="Skuce C.D."/>
            <person name="Smith M."/>
            <person name="Steward C."/>
            <person name="Subramanian S."/>
            <person name="Sycamore N."/>
            <person name="Tracey A."/>
            <person name="Tromans A."/>
            <person name="Van Helmond Z."/>
            <person name="Wall M."/>
            <person name="Wallis J.M."/>
            <person name="White S."/>
            <person name="Whitehead S.L."/>
            <person name="Wilkinson J.E."/>
            <person name="Willey D.L."/>
            <person name="Williams H."/>
            <person name="Wilming L."/>
            <person name="Wray P.W."/>
            <person name="Wu Z."/>
            <person name="Coulson A."/>
            <person name="Vaudin M."/>
            <person name="Sulston J.E."/>
            <person name="Durbin R.M."/>
            <person name="Hubbard T."/>
            <person name="Wooster R."/>
            <person name="Dunham I."/>
            <person name="Carter N.P."/>
            <person name="McVean G."/>
            <person name="Ross M.T."/>
            <person name="Harrow J."/>
            <person name="Olson M.V."/>
            <person name="Beck S."/>
            <person name="Rogers J."/>
            <person name="Bentley D.R."/>
        </authorList>
    </citation>
    <scope>NUCLEOTIDE SEQUENCE [LARGE SCALE GENOMIC DNA] (ISOFORMS 1 AND 2)</scope>
</reference>
<reference key="2">
    <citation type="journal article" date="2004" name="Genome Res.">
        <title>The status, quality, and expansion of the NIH full-length cDNA project: the Mammalian Gene Collection (MGC).</title>
        <authorList>
            <consortium name="The MGC Project Team"/>
        </authorList>
    </citation>
    <scope>NUCLEOTIDE SEQUENCE [LARGE SCALE MRNA] (ISOFORM 1)</scope>
    <source>
        <tissue>Brain</tissue>
        <tissue>Prostate</tissue>
        <tissue>Uterus</tissue>
    </source>
</reference>
<reference key="3">
    <citation type="journal article" date="2012" name="Genome Biol.">
        <title>Iterative orthology prediction uncovers new mitochondrial proteins and identifies C12orf62 as the human ortholog of COX14, a protein involved in the assembly of cytochrome c oxidase.</title>
        <authorList>
            <person name="Szklarczyk R."/>
            <person name="Wanschers B.F."/>
            <person name="Cuypers T.D."/>
            <person name="Esseling J.J."/>
            <person name="Riemersma M."/>
            <person name="van den Brand M.A."/>
            <person name="Gloerich J."/>
            <person name="Lasonder E."/>
            <person name="van den Heuvel L.P."/>
            <person name="Nijtmans L.G."/>
            <person name="Huynen M.A."/>
        </authorList>
    </citation>
    <scope>IDENTIFICATION</scope>
</reference>
<reference key="4">
    <citation type="journal article" date="2011" name="BMC Syst. Biol.">
        <title>Initial characterization of the human central proteome.</title>
        <authorList>
            <person name="Burkard T.R."/>
            <person name="Planyavsky M."/>
            <person name="Kaupe I."/>
            <person name="Breitwieser F.P."/>
            <person name="Buerckstuemmer T."/>
            <person name="Bennett K.L."/>
            <person name="Superti-Furga G."/>
            <person name="Colinge J."/>
        </authorList>
    </citation>
    <scope>IDENTIFICATION BY MASS SPECTROMETRY [LARGE SCALE ANALYSIS]</scope>
</reference>
<reference key="5">
    <citation type="journal article" date="2012" name="Mol. Cell. Proteomics">
        <title>Comparative large-scale characterisation of plant vs. mammal proteins reveals similar and idiosyncratic N-alpha acetylation features.</title>
        <authorList>
            <person name="Bienvenut W.V."/>
            <person name="Sumpton D."/>
            <person name="Martinez A."/>
            <person name="Lilla S."/>
            <person name="Espagne C."/>
            <person name="Meinnel T."/>
            <person name="Giglione C."/>
        </authorList>
    </citation>
    <scope>ACETYLATION [LARGE SCALE ANALYSIS] AT ALA-2</scope>
    <scope>CLEAVAGE OF INITIATOR METHIONINE [LARGE SCALE ANALYSIS]</scope>
    <scope>IDENTIFICATION BY MASS SPECTROMETRY [LARGE SCALE ANALYSIS]</scope>
</reference>
<reference key="6">
    <citation type="journal article" date="2014" name="Hum. Mol. Genet.">
        <title>Human COX20 cooperates with SCO1 and SCO2 to mature COX2 and promote the assembly of cytochrome c oxidase.</title>
        <authorList>
            <person name="Bourens M."/>
            <person name="Boulet A."/>
            <person name="Leary S.C."/>
            <person name="Barrientos A."/>
        </authorList>
    </citation>
    <scope>FUNCTION</scope>
    <scope>INTERACTION WITH MT-CO2; SCO1 AND SCO2</scope>
    <scope>SUBCELLULAR LOCATION</scope>
</reference>
<reference key="7">
    <citation type="journal article" date="2015" name="Proteomics">
        <title>N-terminome analysis of the human mitochondrial proteome.</title>
        <authorList>
            <person name="Vaca Jacome A.S."/>
            <person name="Rabilloud T."/>
            <person name="Schaeffer-Reiss C."/>
            <person name="Rompais M."/>
            <person name="Ayoub D."/>
            <person name="Lane L."/>
            <person name="Bairoch A."/>
            <person name="Van Dorsselaer A."/>
            <person name="Carapito C."/>
        </authorList>
    </citation>
    <scope>ACETYLATION [LARGE SCALE ANALYSIS] AT ALA-2</scope>
    <scope>CLEAVAGE OF INITIATOR METHIONINE [LARGE SCALE ANALYSIS]</scope>
    <scope>IDENTIFICATION BY MASS SPECTROMETRY [LARGE SCALE ANALYSIS]</scope>
</reference>
<reference key="8">
    <citation type="journal article" date="2017" name="J. Biol. Chem.">
        <title>Human mitochondrial cytochrome c oxidase assembly factor COX18 acts transiently as a membrane insertase within the subunit 2 maturation module.</title>
        <authorList>
            <person name="Bourens M."/>
            <person name="Barrientos A."/>
        </authorList>
    </citation>
    <scope>INTERACTION WITH MT-CO2; SCO1; SCO2; COA6 AND COX18</scope>
</reference>
<reference key="9">
    <citation type="journal article" date="2013" name="Hum. Mol. Genet.">
        <title>A mutation in the FAM36A gene, the human ortholog of COX20, impairs cytochrome c oxidase assembly and is associated with ataxia and muscle hypotonia.</title>
        <authorList>
            <person name="Szklarczyk R."/>
            <person name="Wanschers B.F."/>
            <person name="Nijtmans L.G."/>
            <person name="Rodenburg R.J."/>
            <person name="Zschocke J."/>
            <person name="Dikow N."/>
            <person name="van den Brand M.A."/>
            <person name="Hendriks-Franssen M.G."/>
            <person name="Gilissen C."/>
            <person name="Veltman J.A."/>
            <person name="Nooteboom M."/>
            <person name="Koopman W.J."/>
            <person name="Willems P.H."/>
            <person name="Smeitink J.A."/>
            <person name="Huynen M.A."/>
            <person name="van den Heuvel L.P."/>
        </authorList>
    </citation>
    <scope>VARIANT MC4DN11 PRO-52</scope>
    <scope>CHARACTERIZATION OF VARIANT MC4DN11 PRO-52</scope>
    <scope>FUNCTION</scope>
    <scope>SUBCELLULAR LOCATION</scope>
    <scope>TOPOLOGY</scope>
    <scope>INTERACTION WITH MT-CO2</scope>
</reference>
<reference key="10">
    <citation type="journal article" date="2014" name="J. Neurol.">
        <title>Recessive dystonia-ataxia syndrome in a Turkish family caused by a COX20 (FAM36A) mutation.</title>
        <authorList>
            <person name="Doss S."/>
            <person name="Lohmann K."/>
            <person name="Seibler P."/>
            <person name="Arns B."/>
            <person name="Klopstock T."/>
            <person name="Zuehlke C."/>
            <person name="Freimann K."/>
            <person name="Winkler S."/>
            <person name="Lohnau T."/>
            <person name="Drungowski M."/>
            <person name="Nuernberg P."/>
            <person name="Wiegers K."/>
            <person name="Lohmann E."/>
            <person name="Naz S."/>
            <person name="Kasten M."/>
            <person name="Bohner G."/>
            <person name="Ramirez A."/>
            <person name="Endres M."/>
            <person name="Klein C."/>
        </authorList>
    </citation>
    <scope>VARIANT MC4DN11 PRO-52</scope>
    <scope>VARIANT SER-118</scope>
</reference>
<reference key="11">
    <citation type="journal article" date="2017" name="Biochim. Biophys. Acta">
        <title>The mitochondrial TMEM177 associates with COX20 during COX2 biogenesis.</title>
        <authorList>
            <person name="Lorenzi I."/>
            <person name="Oeljeklaus S."/>
            <person name="Aich A."/>
            <person name="Ronsoer C."/>
            <person name="Callegari S."/>
            <person name="Dudek J."/>
            <person name="Warscheid B."/>
            <person name="Dennerlein S."/>
            <person name="Rehling P."/>
        </authorList>
    </citation>
    <scope>CHARACTERIZATION OF VARIANT MC4DN11 PRO-52</scope>
    <scope>IDENTIFICATION IN A COMPLEX WITH TMEM177; COA6; MT-CO2; COX18; SCO1 AND SCO2</scope>
    <scope>INTERACTION WITH TMEM177; COA6; MT-CO2; SCO1 AND SCO2</scope>
</reference>
<accession>Q5RI15</accession>
<accession>Q8WV86</accession>
<dbReference type="EMBL" id="BX323046">
    <property type="status" value="NOT_ANNOTATED_CDS"/>
    <property type="molecule type" value="Genomic_DNA"/>
</dbReference>
<dbReference type="EMBL" id="BC018519">
    <property type="protein sequence ID" value="AAH18519.1"/>
    <property type="molecule type" value="mRNA"/>
</dbReference>
<dbReference type="EMBL" id="BC062419">
    <property type="protein sequence ID" value="AAH62419.1"/>
    <property type="molecule type" value="mRNA"/>
</dbReference>
<dbReference type="EMBL" id="BC095486">
    <property type="protein sequence ID" value="AAH95486.1"/>
    <property type="molecule type" value="mRNA"/>
</dbReference>
<dbReference type="CCDS" id="CCDS31080.1">
    <molecule id="Q5RI15-1"/>
</dbReference>
<dbReference type="CCDS" id="CCDS81434.1">
    <molecule id="Q5RI15-2"/>
</dbReference>
<dbReference type="RefSeq" id="NP_001299800.1">
    <molecule id="Q5RI15-1"/>
    <property type="nucleotide sequence ID" value="NM_001312871.1"/>
</dbReference>
<dbReference type="RefSeq" id="NP_001299801.1">
    <molecule id="Q5RI15-2"/>
    <property type="nucleotide sequence ID" value="NM_001312872.1"/>
</dbReference>
<dbReference type="RefSeq" id="NP_932342.1">
    <molecule id="Q5RI15-1"/>
    <property type="nucleotide sequence ID" value="NM_198076.6"/>
</dbReference>
<dbReference type="SMR" id="Q5RI15"/>
<dbReference type="BioGRID" id="125491">
    <property type="interactions" value="56"/>
</dbReference>
<dbReference type="FunCoup" id="Q5RI15">
    <property type="interactions" value="789"/>
</dbReference>
<dbReference type="IntAct" id="Q5RI15">
    <property type="interactions" value="43"/>
</dbReference>
<dbReference type="MINT" id="Q5RI15"/>
<dbReference type="STRING" id="9606.ENSP00000355486"/>
<dbReference type="TCDB" id="8.A.182.1.1">
    <property type="family name" value="the mitochondrial cytochrome c oxidase assembly protein, cox20 (cox20) family"/>
</dbReference>
<dbReference type="GlyGen" id="Q5RI15">
    <property type="glycosylation" value="1 site, 1 O-linked glycan (1 site)"/>
</dbReference>
<dbReference type="iPTMnet" id="Q5RI15"/>
<dbReference type="PhosphoSitePlus" id="Q5RI15"/>
<dbReference type="SwissPalm" id="Q5RI15"/>
<dbReference type="BioMuta" id="COX20"/>
<dbReference type="DMDM" id="71151875"/>
<dbReference type="jPOST" id="Q5RI15"/>
<dbReference type="MassIVE" id="Q5RI15"/>
<dbReference type="PaxDb" id="9606-ENSP00000406327"/>
<dbReference type="PeptideAtlas" id="Q5RI15"/>
<dbReference type="ProteomicsDB" id="63739">
    <molecule id="Q5RI15-1"/>
</dbReference>
<dbReference type="ProteomicsDB" id="63740">
    <molecule id="Q5RI15-2"/>
</dbReference>
<dbReference type="Pumba" id="Q5RI15"/>
<dbReference type="Antibodypedia" id="34716">
    <property type="antibodies" value="72 antibodies from 16 providers"/>
</dbReference>
<dbReference type="DNASU" id="116228"/>
<dbReference type="Ensembl" id="ENST00000366528.3">
    <molecule id="Q5RI15-2"/>
    <property type="protein sequence ID" value="ENSP00000355486.3"/>
    <property type="gene ID" value="ENSG00000203667.10"/>
</dbReference>
<dbReference type="Ensembl" id="ENST00000411948.7">
    <molecule id="Q5RI15-1"/>
    <property type="protein sequence ID" value="ENSP00000406327.2"/>
    <property type="gene ID" value="ENSG00000203667.10"/>
</dbReference>
<dbReference type="GeneID" id="116228"/>
<dbReference type="KEGG" id="hsa:116228"/>
<dbReference type="MANE-Select" id="ENST00000411948.7">
    <property type="protein sequence ID" value="ENSP00000406327.2"/>
    <property type="RefSeq nucleotide sequence ID" value="NM_198076.6"/>
    <property type="RefSeq protein sequence ID" value="NP_932342.1"/>
</dbReference>
<dbReference type="UCSC" id="uc001iar.5">
    <molecule id="Q5RI15-1"/>
    <property type="organism name" value="human"/>
</dbReference>
<dbReference type="AGR" id="HGNC:26970"/>
<dbReference type="CTD" id="116228"/>
<dbReference type="DisGeNET" id="116228"/>
<dbReference type="GeneCards" id="COX20"/>
<dbReference type="HGNC" id="HGNC:26970">
    <property type="gene designation" value="COX20"/>
</dbReference>
<dbReference type="HPA" id="ENSG00000203667">
    <property type="expression patterns" value="Low tissue specificity"/>
</dbReference>
<dbReference type="MalaCards" id="COX20"/>
<dbReference type="MIM" id="614698">
    <property type="type" value="gene"/>
</dbReference>
<dbReference type="MIM" id="619054">
    <property type="type" value="phenotype"/>
</dbReference>
<dbReference type="neXtProt" id="NX_Q5RI15"/>
<dbReference type="OpenTargets" id="ENSG00000203667"/>
<dbReference type="Orphanet" id="254905">
    <property type="disease" value="Isolated cytochrome C oxidase deficiency"/>
</dbReference>
<dbReference type="PharmGKB" id="PA134976890"/>
<dbReference type="VEuPathDB" id="HostDB:ENSG00000203667"/>
<dbReference type="eggNOG" id="ENOG502S3BD">
    <property type="taxonomic scope" value="Eukaryota"/>
</dbReference>
<dbReference type="GeneTree" id="ENSGT00390000016158"/>
<dbReference type="HOGENOM" id="CLU_101495_1_1_1"/>
<dbReference type="InParanoid" id="Q5RI15"/>
<dbReference type="OMA" id="VSQIPCF"/>
<dbReference type="OrthoDB" id="14603at2759"/>
<dbReference type="PAN-GO" id="Q5RI15">
    <property type="GO annotations" value="2 GO annotations based on evolutionary models"/>
</dbReference>
<dbReference type="PhylomeDB" id="Q5RI15"/>
<dbReference type="TreeFam" id="TF323844"/>
<dbReference type="PathwayCommons" id="Q5RI15"/>
<dbReference type="Reactome" id="R-HSA-9864848">
    <property type="pathway name" value="Complex IV assembly"/>
</dbReference>
<dbReference type="SignaLink" id="Q5RI15"/>
<dbReference type="BioGRID-ORCS" id="116228">
    <property type="hits" value="239 hits in 1089 CRISPR screens"/>
</dbReference>
<dbReference type="ChiTaRS" id="COX20">
    <property type="organism name" value="human"/>
</dbReference>
<dbReference type="GenomeRNAi" id="116228"/>
<dbReference type="Pharos" id="Q5RI15">
    <property type="development level" value="Tbio"/>
</dbReference>
<dbReference type="PRO" id="PR:Q5RI15"/>
<dbReference type="Proteomes" id="UP000005640">
    <property type="component" value="Chromosome 1"/>
</dbReference>
<dbReference type="RNAct" id="Q5RI15">
    <property type="molecule type" value="protein"/>
</dbReference>
<dbReference type="Bgee" id="ENSG00000203667">
    <property type="expression patterns" value="Expressed in kidney epithelium and 185 other cell types or tissues"/>
</dbReference>
<dbReference type="ExpressionAtlas" id="Q5RI15">
    <property type="expression patterns" value="baseline and differential"/>
</dbReference>
<dbReference type="GO" id="GO:0005743">
    <property type="term" value="C:mitochondrial inner membrane"/>
    <property type="evidence" value="ECO:0000314"/>
    <property type="project" value="UniProtKB"/>
</dbReference>
<dbReference type="GO" id="GO:0005739">
    <property type="term" value="C:mitochondrion"/>
    <property type="evidence" value="ECO:0000314"/>
    <property type="project" value="HPA"/>
</dbReference>
<dbReference type="GO" id="GO:0033617">
    <property type="term" value="P:mitochondrial cytochrome c oxidase assembly"/>
    <property type="evidence" value="ECO:0000315"/>
    <property type="project" value="UniProtKB"/>
</dbReference>
<dbReference type="InterPro" id="IPR022533">
    <property type="entry name" value="Cox20"/>
</dbReference>
<dbReference type="PANTHER" id="PTHR31586:SF2">
    <property type="entry name" value="CYTOCHROME C OXIDASE ASSEMBLY PROTEIN COX20, MITOCHONDRIAL"/>
    <property type="match status" value="1"/>
</dbReference>
<dbReference type="PANTHER" id="PTHR31586">
    <property type="entry name" value="CYTOCHROME C OXIDASE PROTEIN 20"/>
    <property type="match status" value="1"/>
</dbReference>
<dbReference type="Pfam" id="PF12597">
    <property type="entry name" value="Cox20"/>
    <property type="match status" value="1"/>
</dbReference>
<dbReference type="PRINTS" id="PR02049">
    <property type="entry name" value="PROTEINF36A"/>
</dbReference>
<feature type="initiator methionine" description="Removed" evidence="9 10">
    <location>
        <position position="1"/>
    </location>
</feature>
<feature type="chain" id="PRO_0000186815" description="Cytochrome c oxidase assembly protein COX20, mitochondrial">
    <location>
        <begin position="2"/>
        <end position="118"/>
    </location>
</feature>
<feature type="topological domain" description="Mitochondrial intermembrane" evidence="8">
    <location>
        <begin position="2"/>
        <end position="33"/>
    </location>
</feature>
<feature type="transmembrane region" description="Helical" evidence="1">
    <location>
        <begin position="34"/>
        <end position="51"/>
    </location>
</feature>
<feature type="topological domain" description="Mitochondrial matrix" evidence="8">
    <location>
        <begin position="52"/>
        <end position="60"/>
    </location>
</feature>
<feature type="transmembrane region" description="Helical" evidence="1">
    <location>
        <begin position="61"/>
        <end position="77"/>
    </location>
</feature>
<feature type="topological domain" description="Mitochondrial intermembrane" evidence="8">
    <location>
        <begin position="78"/>
        <end position="118"/>
    </location>
</feature>
<feature type="modified residue" description="N-acetylalanine" evidence="9 10">
    <location>
        <position position="2"/>
    </location>
</feature>
<feature type="splice variant" id="VSP_014855" description="In isoform 2." evidence="7">
    <original>K</original>
    <variation>KASCTSLHLSYWK</variation>
    <location>
        <position position="14"/>
    </location>
</feature>
<feature type="sequence variant" id="VAR_080123" description="In MC4DN11; reduced protein expression; defective mitochondrial respiratory chain complex IV assembly; decreased interaction with MT-CO2/COX2; increased interaction with TMEM177; dbSNP:rs587777004." evidence="2 3 6">
    <original>T</original>
    <variation>P</variation>
    <location>
        <position position="52"/>
    </location>
</feature>
<feature type="sequence variant" id="VAR_080124" description="In dbSNP:rs61749963." evidence="3">
    <original>N</original>
    <variation>S</variation>
    <location>
        <position position="118"/>
    </location>
</feature>
<name>COX20_HUMAN</name>
<gene>
    <name type="primary">COX20</name>
    <name type="synonym">FAM36A</name>
</gene>
<comment type="function">
    <text evidence="2 4">Essential for the assembly of the mitochondrial respiratory chain complex IV (CIV), also known as cytochrome c oxidase (PubMed:23125284). Acts as a chaperone in the early steps of cytochrome c oxidase subunit II (MT-CO2/COX2) maturation, stabilizing the newly synthesized protein and presenting it to metallochaperones SCO1/2 which in turn facilitates the incorporation of the mature MT-CO2/COX2 into the assembling CIV holoenzyme (PubMed:24403053).</text>
</comment>
<comment type="subunit">
    <text evidence="2 4 5 6">Found in a complex with TMEM177, COA6, MT-CO2/COX2, COX18, SCO1 and SCO2. Interacts with SCO1, SCO2 and COA6 in a MT-CO2/COX2- and COX18-dependent manner (PubMed:24403053, PubMed:28330871, PubMed:29154948). Interacts with COX18 in a MT-CO2/COX2-dependent manner (PubMed:28330871). Interacts with MT-CO2/COX2 (PubMed:23125284, PubMed:24403053, PubMed:28330871, PubMed:29154948). Interacts with TMEM177 (PubMed:29154948).</text>
</comment>
<comment type="interaction">
    <interactant intactId="EBI-2834035">
        <id>Q5RI15</id>
    </interactant>
    <interactant intactId="EBI-13059134">
        <id>Q13520</id>
        <label>AQP6</label>
    </interactant>
    <organismsDiffer>false</organismsDiffer>
    <experiments>3</experiments>
</comment>
<comment type="interaction">
    <interactant intactId="EBI-2834035">
        <id>Q5RI15</id>
    </interactant>
    <interactant intactId="EBI-14357960">
        <id>Q9BZP6</id>
        <label>CHIA</label>
    </interactant>
    <organismsDiffer>false</organismsDiffer>
    <experiments>3</experiments>
</comment>
<comment type="interaction">
    <interactant intactId="EBI-2834035">
        <id>Q5RI15</id>
    </interactant>
    <interactant intactId="EBI-6942903">
        <id>Q96BA8</id>
        <label>CREB3L1</label>
    </interactant>
    <organismsDiffer>false</organismsDiffer>
    <experiments>3</experiments>
</comment>
<comment type="interaction">
    <interactant intactId="EBI-2834035">
        <id>Q5RI15</id>
    </interactant>
    <interactant intactId="EBI-17590191">
        <id>Q6P2H7</id>
        <label>DYNC1H1</label>
    </interactant>
    <organismsDiffer>false</organismsDiffer>
    <experiments>3</experiments>
</comment>
<comment type="interaction">
    <interactant intactId="EBI-2834035">
        <id>Q5RI15</id>
    </interactant>
    <interactant intactId="EBI-781551">
        <id>Q9Y282</id>
        <label>ERGIC3</label>
    </interactant>
    <organismsDiffer>false</organismsDiffer>
    <experiments>3</experiments>
</comment>
<comment type="interaction">
    <interactant intactId="EBI-2834035">
        <id>Q5RI15</id>
    </interactant>
    <interactant intactId="EBI-714482">
        <id>Q9BWH2</id>
        <label>FUNDC2</label>
    </interactant>
    <organismsDiffer>false</organismsDiffer>
    <experiments>3</experiments>
</comment>
<comment type="interaction">
    <interactant intactId="EBI-2834035">
        <id>Q5RI15</id>
    </interactant>
    <interactant intactId="EBI-18908258">
        <id>O00258</id>
        <label>GET1</label>
    </interactant>
    <organismsDiffer>false</organismsDiffer>
    <experiments>3</experiments>
</comment>
<comment type="interaction">
    <interactant intactId="EBI-2834035">
        <id>Q5RI15</id>
    </interactant>
    <interactant intactId="EBI-17458373">
        <id>P48165</id>
        <label>GJA8</label>
    </interactant>
    <organismsDiffer>false</organismsDiffer>
    <experiments>3</experiments>
</comment>
<comment type="interaction">
    <interactant intactId="EBI-2834035">
        <id>Q5RI15</id>
    </interactant>
    <interactant intactId="EBI-17231387">
        <id>Q6ZVE7</id>
        <label>GOLT1A</label>
    </interactant>
    <organismsDiffer>false</organismsDiffer>
    <experiments>3</experiments>
</comment>
<comment type="interaction">
    <interactant intactId="EBI-2834035">
        <id>Q5RI15</id>
    </interactant>
    <interactant intactId="EBI-10266796">
        <id>Q8N5M9</id>
        <label>JAGN1</label>
    </interactant>
    <organismsDiffer>false</organismsDiffer>
    <experiments>3</experiments>
</comment>
<comment type="interaction">
    <interactant intactId="EBI-2834035">
        <id>Q5RI15</id>
    </interactant>
    <interactant intactId="EBI-3911344">
        <id>P27338</id>
        <label>MAOB</label>
    </interactant>
    <organismsDiffer>false</organismsDiffer>
    <experiments>3</experiments>
</comment>
<comment type="interaction">
    <interactant intactId="EBI-2834035">
        <id>Q5RI15</id>
    </interactant>
    <interactant intactId="EBI-12022316">
        <id>Q9BUN1</id>
        <label>MENT</label>
    </interactant>
    <organismsDiffer>false</organismsDiffer>
    <experiments>3</experiments>
</comment>
<comment type="interaction">
    <interactant intactId="EBI-2834035">
        <id>Q5RI15</id>
    </interactant>
    <interactant intactId="EBI-10986258">
        <id>Q69YL0</id>
        <label>NCBP2AS2</label>
    </interactant>
    <organismsDiffer>false</organismsDiffer>
    <experiments>3</experiments>
</comment>
<comment type="interaction">
    <interactant intactId="EBI-2834035">
        <id>Q5RI15</id>
    </interactant>
    <interactant intactId="EBI-1050125">
        <id>O15173</id>
        <label>PGRMC2</label>
    </interactant>
    <organismsDiffer>false</organismsDiffer>
    <experiments>3</experiments>
</comment>
<comment type="interaction">
    <interactant intactId="EBI-2834035">
        <id>Q5RI15</id>
    </interactant>
    <interactant intactId="EBI-3923031">
        <id>Q14973</id>
        <label>SLC10A1</label>
    </interactant>
    <organismsDiffer>false</organismsDiffer>
    <experiments>3</experiments>
</comment>
<comment type="interaction">
    <interactant intactId="EBI-2834035">
        <id>Q5RI15</id>
    </interactant>
    <interactant intactId="EBI-18159983">
        <id>Q3KNW5</id>
        <label>SLC10A6</label>
    </interactant>
    <organismsDiffer>false</organismsDiffer>
    <experiments>3</experiments>
</comment>
<comment type="interaction">
    <interactant intactId="EBI-2834035">
        <id>Q5RI15</id>
    </interactant>
    <interactant intactId="EBI-710310">
        <id>Q15560</id>
        <label>TCEA2</label>
    </interactant>
    <organismsDiffer>false</organismsDiffer>
    <experiments>3</experiments>
</comment>
<comment type="interaction">
    <interactant intactId="EBI-2834035">
        <id>Q5RI15</id>
    </interactant>
    <interactant intactId="EBI-10278496">
        <id>Q53QW1</id>
        <label>TEX44</label>
    </interactant>
    <organismsDiffer>false</organismsDiffer>
    <experiments>3</experiments>
</comment>
<comment type="interaction">
    <interactant intactId="EBI-2834035">
        <id>Q5RI15</id>
    </interactant>
    <interactant intactId="EBI-11722971">
        <id>Q53FP2</id>
        <label>TMEM35A</label>
    </interactant>
    <organismsDiffer>false</organismsDiffer>
    <experiments>3</experiments>
</comment>
<comment type="interaction">
    <interactant intactId="EBI-2834035">
        <id>Q5RI15</id>
    </interactant>
    <interactant intactId="EBI-6447886">
        <id>Q9Y320</id>
        <label>TMX2</label>
    </interactant>
    <organismsDiffer>false</organismsDiffer>
    <experiments>3</experiments>
</comment>
<comment type="subcellular location">
    <subcellularLocation>
        <location evidence="2 6">Mitochondrion inner membrane</location>
        <topology evidence="1">Multi-pass membrane protein</topology>
    </subcellularLocation>
</comment>
<comment type="alternative products">
    <event type="alternative splicing"/>
    <isoform>
        <id>Q5RI15-1</id>
        <name>1</name>
        <sequence type="displayed"/>
    </isoform>
    <isoform>
        <id>Q5RI15-2</id>
        <name>2</name>
        <sequence type="described" ref="VSP_014855"/>
    </isoform>
</comment>
<comment type="disease" evidence="2 3 6">
    <disease id="DI-05933">
        <name>Mitochondrial complex IV deficiency, nuclear type 11</name>
        <acronym>MC4DN11</acronym>
        <description>An autosomal recessive mitochondrial disorder with onset in childhood or adolescence. MC4DN11 is characterized by walking difficulties, cerebellar ataxia, dystonia, choreoathetotic movements and dysarthria. Additional features may include sensory axonal neuropathy, cerebellar atrophy, and mild speech delay. Cognitive function is normal. Serum lactate levels are increased. Patient tissues show decreased levels and activity of mitochondrial respiratory complex IV.</description>
        <dbReference type="MIM" id="619054"/>
    </disease>
    <text>The disease is caused by variants affecting the gene represented in this entry.</text>
</comment>
<comment type="similarity">
    <text evidence="7">Belongs to the COX20 family.</text>
</comment>
<proteinExistence type="evidence at protein level"/>
<keyword id="KW-0007">Acetylation</keyword>
<keyword id="KW-0025">Alternative splicing</keyword>
<keyword id="KW-0225">Disease variant</keyword>
<keyword id="KW-0472">Membrane</keyword>
<keyword id="KW-0496">Mitochondrion</keyword>
<keyword id="KW-0999">Mitochondrion inner membrane</keyword>
<keyword id="KW-1274">Primary mitochondrial disease</keyword>
<keyword id="KW-1267">Proteomics identification</keyword>
<keyword id="KW-1185">Reference proteome</keyword>
<keyword id="KW-0812">Transmembrane</keyword>
<keyword id="KW-1133">Transmembrane helix</keyword>
<organism>
    <name type="scientific">Homo sapiens</name>
    <name type="common">Human</name>
    <dbReference type="NCBI Taxonomy" id="9606"/>
    <lineage>
        <taxon>Eukaryota</taxon>
        <taxon>Metazoa</taxon>
        <taxon>Chordata</taxon>
        <taxon>Craniata</taxon>
        <taxon>Vertebrata</taxon>
        <taxon>Euteleostomi</taxon>
        <taxon>Mammalia</taxon>
        <taxon>Eutheria</taxon>
        <taxon>Euarchontoglires</taxon>
        <taxon>Primates</taxon>
        <taxon>Haplorrhini</taxon>
        <taxon>Catarrhini</taxon>
        <taxon>Hominidae</taxon>
        <taxon>Homo</taxon>
    </lineage>
</organism>
<protein>
    <recommendedName>
        <fullName>Cytochrome c oxidase assembly protein COX20, mitochondrial</fullName>
    </recommendedName>
</protein>